<gene>
    <name evidence="1" type="primary">rplV</name>
    <name type="ordered locus">Nwi_1369</name>
</gene>
<keyword id="KW-1185">Reference proteome</keyword>
<keyword id="KW-0687">Ribonucleoprotein</keyword>
<keyword id="KW-0689">Ribosomal protein</keyword>
<keyword id="KW-0694">RNA-binding</keyword>
<keyword id="KW-0699">rRNA-binding</keyword>
<comment type="function">
    <text evidence="1">This protein binds specifically to 23S rRNA; its binding is stimulated by other ribosomal proteins, e.g. L4, L17, and L20. It is important during the early stages of 50S assembly. It makes multiple contacts with different domains of the 23S rRNA in the assembled 50S subunit and ribosome (By similarity).</text>
</comment>
<comment type="function">
    <text evidence="1">The globular domain of the protein is located near the polypeptide exit tunnel on the outside of the subunit, while an extended beta-hairpin is found that lines the wall of the exit tunnel in the center of the 70S ribosome.</text>
</comment>
<comment type="subunit">
    <text evidence="1">Part of the 50S ribosomal subunit.</text>
</comment>
<comment type="similarity">
    <text evidence="1">Belongs to the universal ribosomal protein uL22 family.</text>
</comment>
<evidence type="ECO:0000255" key="1">
    <source>
        <dbReference type="HAMAP-Rule" id="MF_01331"/>
    </source>
</evidence>
<evidence type="ECO:0000305" key="2"/>
<dbReference type="EMBL" id="CP000115">
    <property type="protein sequence ID" value="ABA04630.1"/>
    <property type="molecule type" value="Genomic_DNA"/>
</dbReference>
<dbReference type="RefSeq" id="WP_009797133.1">
    <property type="nucleotide sequence ID" value="NC_007406.1"/>
</dbReference>
<dbReference type="SMR" id="Q3SSW1"/>
<dbReference type="STRING" id="323098.Nwi_1369"/>
<dbReference type="KEGG" id="nwi:Nwi_1369"/>
<dbReference type="eggNOG" id="COG0091">
    <property type="taxonomic scope" value="Bacteria"/>
</dbReference>
<dbReference type="HOGENOM" id="CLU_083987_3_0_5"/>
<dbReference type="OrthoDB" id="9805969at2"/>
<dbReference type="Proteomes" id="UP000002531">
    <property type="component" value="Chromosome"/>
</dbReference>
<dbReference type="GO" id="GO:0022625">
    <property type="term" value="C:cytosolic large ribosomal subunit"/>
    <property type="evidence" value="ECO:0007669"/>
    <property type="project" value="TreeGrafter"/>
</dbReference>
<dbReference type="GO" id="GO:0019843">
    <property type="term" value="F:rRNA binding"/>
    <property type="evidence" value="ECO:0007669"/>
    <property type="project" value="UniProtKB-UniRule"/>
</dbReference>
<dbReference type="GO" id="GO:0003735">
    <property type="term" value="F:structural constituent of ribosome"/>
    <property type="evidence" value="ECO:0007669"/>
    <property type="project" value="InterPro"/>
</dbReference>
<dbReference type="GO" id="GO:0006412">
    <property type="term" value="P:translation"/>
    <property type="evidence" value="ECO:0007669"/>
    <property type="project" value="UniProtKB-UniRule"/>
</dbReference>
<dbReference type="CDD" id="cd00336">
    <property type="entry name" value="Ribosomal_L22"/>
    <property type="match status" value="1"/>
</dbReference>
<dbReference type="Gene3D" id="3.90.470.10">
    <property type="entry name" value="Ribosomal protein L22/L17"/>
    <property type="match status" value="1"/>
</dbReference>
<dbReference type="HAMAP" id="MF_01331_B">
    <property type="entry name" value="Ribosomal_uL22_B"/>
    <property type="match status" value="1"/>
</dbReference>
<dbReference type="InterPro" id="IPR001063">
    <property type="entry name" value="Ribosomal_uL22"/>
</dbReference>
<dbReference type="InterPro" id="IPR005727">
    <property type="entry name" value="Ribosomal_uL22_bac/chlpt-type"/>
</dbReference>
<dbReference type="InterPro" id="IPR047867">
    <property type="entry name" value="Ribosomal_uL22_bac/org-type"/>
</dbReference>
<dbReference type="InterPro" id="IPR036394">
    <property type="entry name" value="Ribosomal_uL22_sf"/>
</dbReference>
<dbReference type="NCBIfam" id="TIGR01044">
    <property type="entry name" value="rplV_bact"/>
    <property type="match status" value="1"/>
</dbReference>
<dbReference type="PANTHER" id="PTHR13501">
    <property type="entry name" value="CHLOROPLAST 50S RIBOSOMAL PROTEIN L22-RELATED"/>
    <property type="match status" value="1"/>
</dbReference>
<dbReference type="PANTHER" id="PTHR13501:SF8">
    <property type="entry name" value="LARGE RIBOSOMAL SUBUNIT PROTEIN UL22M"/>
    <property type="match status" value="1"/>
</dbReference>
<dbReference type="Pfam" id="PF00237">
    <property type="entry name" value="Ribosomal_L22"/>
    <property type="match status" value="1"/>
</dbReference>
<dbReference type="SUPFAM" id="SSF54843">
    <property type="entry name" value="Ribosomal protein L22"/>
    <property type="match status" value="1"/>
</dbReference>
<sequence length="128" mass="14159">MSKPKRERSLPENEAKAIARMLRVSPQKLNLVAQLIRGRKASAALADLQFSRKRIAGDVKKCLESAIANAENNHDLDVDELIVSEAFVGNGMVMKRFAPRGRGRSGRIYKPFSQLTIVVRQVEAEASA</sequence>
<proteinExistence type="inferred from homology"/>
<name>RL22_NITWN</name>
<feature type="chain" id="PRO_0000243175" description="Large ribosomal subunit protein uL22">
    <location>
        <begin position="1"/>
        <end position="128"/>
    </location>
</feature>
<reference key="1">
    <citation type="journal article" date="2006" name="Appl. Environ. Microbiol.">
        <title>Genome sequence of the chemolithoautotrophic nitrite-oxidizing bacterium Nitrobacter winogradskyi Nb-255.</title>
        <authorList>
            <person name="Starkenburg S.R."/>
            <person name="Chain P.S.G."/>
            <person name="Sayavedra-Soto L.A."/>
            <person name="Hauser L."/>
            <person name="Land M.L."/>
            <person name="Larimer F.W."/>
            <person name="Malfatti S.A."/>
            <person name="Klotz M.G."/>
            <person name="Bottomley P.J."/>
            <person name="Arp D.J."/>
            <person name="Hickey W.J."/>
        </authorList>
    </citation>
    <scope>NUCLEOTIDE SEQUENCE [LARGE SCALE GENOMIC DNA]</scope>
    <source>
        <strain>ATCC 25391 / DSM 10237 / CIP 104748 / NCIMB 11846 / Nb-255</strain>
    </source>
</reference>
<protein>
    <recommendedName>
        <fullName evidence="1">Large ribosomal subunit protein uL22</fullName>
    </recommendedName>
    <alternativeName>
        <fullName evidence="2">50S ribosomal protein L22</fullName>
    </alternativeName>
</protein>
<accession>Q3SSW1</accession>
<organism>
    <name type="scientific">Nitrobacter winogradskyi (strain ATCC 25391 / DSM 10237 / CIP 104748 / NCIMB 11846 / Nb-255)</name>
    <dbReference type="NCBI Taxonomy" id="323098"/>
    <lineage>
        <taxon>Bacteria</taxon>
        <taxon>Pseudomonadati</taxon>
        <taxon>Pseudomonadota</taxon>
        <taxon>Alphaproteobacteria</taxon>
        <taxon>Hyphomicrobiales</taxon>
        <taxon>Nitrobacteraceae</taxon>
        <taxon>Nitrobacter</taxon>
    </lineage>
</organism>